<protein>
    <recommendedName>
        <fullName>Potassium channel toxin TsTXK-beta/Cryptide TyPep-16</fullName>
    </recommendedName>
    <component>
        <recommendedName>
            <fullName evidence="12">Cryptide TyPep-16</fullName>
        </recommendedName>
    </component>
    <component>
        <recommendedName>
            <fullName>Potassium channel toxin TsTXK-beta</fullName>
            <shortName>TsTXKbeta</shortName>
        </recommendedName>
        <alternativeName>
            <fullName>Potassium channel toxin beta-KTx 1</fullName>
        </alternativeName>
        <alternativeName>
            <fullName>Tityustoxin K-beta</fullName>
            <shortName>TsTX K beta</shortName>
            <shortName>TsTX-K beta</shortName>
        </alternativeName>
        <alternativeName>
            <fullName evidence="13">Tityustoxin-8</fullName>
            <shortName evidence="10 11">Ts8</shortName>
        </alternativeName>
        <alternativeName>
            <fullName>TsK2</fullName>
        </alternativeName>
    </component>
    <component>
        <recommendedName>
            <fullName evidence="1">Cryptide Pep-3</fullName>
        </recommendedName>
    </component>
    <component>
        <recommendedName>
            <fullName evidence="2">Cryptide Pep-26</fullName>
        </recommendedName>
    </component>
</protein>
<proteinExistence type="evidence at protein level"/>
<comment type="function">
    <molecule>Potassium channel toxin TsTXK-beta</molecule>
    <text evidence="6 8">Specifically blocks voltage-gated potassium channels Kv4.2/KCND2. When measured at the peak current, the blocking effect of this toxin is about 65% and shows an IC(50)=652 nM (PubMed:27346450). However, when measured at a later moment of the depolarising test pulse (500 ms), a 100% block of the current is observed with an IC(50)=313 nM (PubMed:27346450). This may indicate a preference of the toxin for binding the inactivated state of the channel. The inhibition is completely reversible (PubMed:27346450). In vivo, intraplantar injection into rat paw induces overt nociception (licking and lifting behaviors) and decreases the mechanical nociceptive threshold (hyperalgesia). Furthermore, the hyperalgesia is prolonged when intrathecal injections are performed (PubMed:27346450).</text>
</comment>
<comment type="function">
    <molecule>Cryptide TyPep-16</molecule>
    <text evidence="7">Induces discomfort and anxiety in mice, as it moderately diminishes locomotion (but has no effect on rearing behavior). Does not cause hemolysis, mast cell degranulation, LDH release, and does not have antimicrobial activity. Does not cause edema and pain.</text>
</comment>
<comment type="function">
    <molecule>Cryptide Pep-3</molecule>
    <text evidence="1">Does not induce hemolytic activity, lactate dehydrogenase (LDH) release from mast cells, mast cell degranulation, and antimicrobial effects. In vivo, injection into mice causes moderate edema formation, but induces very weak or no change in nociceptive sensibility. It also reduces mice locomotion, suggesting an increase in anxiety, but causes no alteration in rearing (standing on hind limbs).</text>
</comment>
<comment type="subcellular location">
    <subcellularLocation>
        <location evidence="5">Secreted</location>
    </subcellularLocation>
</comment>
<comment type="tissue specificity">
    <text evidence="15">Expressed by the venom gland.</text>
</comment>
<comment type="mass spectrometry" mass="6716.15" method="Electrospray" evidence="9"/>
<comment type="miscellaneous">
    <text evidence="15">It is not known if the sequenced fragment corresponding to the propeptide is the result of the post-translational maturation process, or if it has a biological activity of its own.</text>
</comment>
<comment type="miscellaneous">
    <text evidence="13">The primary structure of this cryptide Pep-3 is identical to that of cryptide Pep-3 from other Tityus species (AC P0DRE8, AC Q5G8A6, AC P0C2F3).</text>
</comment>
<comment type="miscellaneous">
    <text evidence="13">The primary structure of this cryptide Pep-26 is identical to that of cryptide Pep-26 from Tityus obscurus (AC P0DRH1).</text>
</comment>
<comment type="miscellaneous">
    <text evidence="6">Negative results: does not inhibit voltage-gated sodium channels tested (Nav1.2, Nav1.4, Nav1.6 and B.germanica BgNav) and most of the voltage-gated potassium channels tested (Kv1.1, Kv1.2, Kv1.3, Kv1.4, Kv1.5, Kv1.6, Shaker, Kv2.1, Kv3.1, Kv7.1, Kv7.2, Kv7.4, Kv7.5, Kv10.1 and hERG). No hemolysis and no pore-forming activities are induced by this toxin.</text>
</comment>
<comment type="similarity">
    <text evidence="13">Belongs to the long chain scorpion toxin family. Class 1 subfamily.</text>
</comment>
<evidence type="ECO:0000250" key="1">
    <source>
        <dbReference type="UniProtKB" id="P0DRE8"/>
    </source>
</evidence>
<evidence type="ECO:0000250" key="2">
    <source>
        <dbReference type="UniProtKB" id="P0DRH1"/>
    </source>
</evidence>
<evidence type="ECO:0000255" key="3"/>
<evidence type="ECO:0000255" key="4">
    <source>
        <dbReference type="PROSITE-ProRule" id="PRU01209"/>
    </source>
</evidence>
<evidence type="ECO:0000269" key="5">
    <source>
    </source>
</evidence>
<evidence type="ECO:0000269" key="6">
    <source>
    </source>
</evidence>
<evidence type="ECO:0000269" key="7">
    <source>
    </source>
</evidence>
<evidence type="ECO:0000269" key="8">
    <source>
    </source>
</evidence>
<evidence type="ECO:0000269" key="9">
    <source>
    </source>
</evidence>
<evidence type="ECO:0000303" key="10">
    <source>
    </source>
</evidence>
<evidence type="ECO:0000303" key="11">
    <source>
    </source>
</evidence>
<evidence type="ECO:0000303" key="12">
    <source>
    </source>
</evidence>
<evidence type="ECO:0000305" key="13"/>
<evidence type="ECO:0000305" key="14">
    <source>
    </source>
</evidence>
<evidence type="ECO:0000305" key="15">
    <source>
    </source>
</evidence>
<evidence type="ECO:0000305" key="16">
    <source>
    </source>
</evidence>
<evidence type="ECO:0000305" key="17">
    <source>
    </source>
</evidence>
<evidence type="ECO:0000312" key="18">
    <source>
        <dbReference type="EMBL" id="QPD99047.1"/>
    </source>
</evidence>
<organism>
    <name type="scientific">Tityus serrulatus</name>
    <name type="common">Brazilian scorpion</name>
    <dbReference type="NCBI Taxonomy" id="6887"/>
    <lineage>
        <taxon>Eukaryota</taxon>
        <taxon>Metazoa</taxon>
        <taxon>Ecdysozoa</taxon>
        <taxon>Arthropoda</taxon>
        <taxon>Chelicerata</taxon>
        <taxon>Arachnida</taxon>
        <taxon>Scorpiones</taxon>
        <taxon>Buthida</taxon>
        <taxon>Buthoidea</taxon>
        <taxon>Buthidae</taxon>
        <taxon>Tityus</taxon>
    </lineage>
</organism>
<keyword id="KW-0903">Direct protein sequencing</keyword>
<keyword id="KW-1015">Disulfide bond</keyword>
<keyword id="KW-0872">Ion channel impairing toxin</keyword>
<keyword id="KW-0528">Neurotoxin</keyword>
<keyword id="KW-0632">Potassium channel impairing toxin</keyword>
<keyword id="KW-0964">Secreted</keyword>
<keyword id="KW-0732">Signal</keyword>
<keyword id="KW-0800">Toxin</keyword>
<keyword id="KW-1220">Voltage-gated potassium channel impairing toxin</keyword>
<dbReference type="EMBL" id="MT450711">
    <property type="protein sequence ID" value="QPD99047.1"/>
    <property type="molecule type" value="mRNA"/>
</dbReference>
<dbReference type="SMR" id="P69940"/>
<dbReference type="GO" id="GO:0005576">
    <property type="term" value="C:extracellular region"/>
    <property type="evidence" value="ECO:0007669"/>
    <property type="project" value="UniProtKB-SubCell"/>
</dbReference>
<dbReference type="GO" id="GO:0015459">
    <property type="term" value="F:potassium channel regulator activity"/>
    <property type="evidence" value="ECO:0007669"/>
    <property type="project" value="UniProtKB-KW"/>
</dbReference>
<dbReference type="GO" id="GO:0090729">
    <property type="term" value="F:toxin activity"/>
    <property type="evidence" value="ECO:0007669"/>
    <property type="project" value="UniProtKB-KW"/>
</dbReference>
<dbReference type="InterPro" id="IPR029237">
    <property type="entry name" value="Long_scorpion_toxin_alpha/beta"/>
</dbReference>
<dbReference type="Pfam" id="PF14866">
    <property type="entry name" value="Scorpion_toxin_alpha-beta"/>
    <property type="match status" value="1"/>
</dbReference>
<dbReference type="PROSITE" id="PS51862">
    <property type="entry name" value="BSPN_CSAB"/>
    <property type="match status" value="1"/>
</dbReference>
<accession>P69940</accession>
<accession>A0A7S8MV52</accession>
<name>KBX1_TITSE</name>
<reference key="1">
    <citation type="journal article" date="2001" name="Toxicon">
        <title>Screening of expression libraries using ELISA: identification of immunogenic proteins from Tityus bahiensis and Tityus serrulatus venom.</title>
        <authorList>
            <person name="Kalapothakis E."/>
            <person name="Jardim S."/>
            <person name="Magalhaes A.C."/>
            <person name="Mendes T.M."/>
            <person name="De Marco L."/>
            <person name="Afonso L.C.C."/>
            <person name="Chavez-Olortegui C."/>
        </authorList>
    </citation>
    <scope>NUCLEOTIDE SEQUENCE [MRNA]</scope>
    <source>
        <tissue>Venom gland</tissue>
    </source>
</reference>
<reference evidence="18" key="2">
    <citation type="journal article" date="2021" name="Toxicon">
        <title>Novel components of Tityus serrulatus venom: a transcriptomic approach.</title>
        <authorList>
            <person name="Kalapothakis Y."/>
            <person name="Miranda K."/>
            <person name="Pereira A.H."/>
            <person name="Witt A.S.A."/>
            <person name="Marani C."/>
            <person name="Martins A.P."/>
            <person name="Leal H.G."/>
            <person name="Campos-Junior E."/>
            <person name="Pimenta A.M.C."/>
            <person name="Borges A."/>
            <person name="Chavez-Olortegui C."/>
            <person name="Kalapothakis E."/>
        </authorList>
    </citation>
    <scope>NUCLEOTIDE SEQUENCE [MRNA]</scope>
    <source>
        <tissue>Telson</tissue>
    </source>
</reference>
<reference key="3">
    <citation type="journal article" date="1998" name="FEBS Lett.">
        <title>Evidence for a new class of scorpion toxins active against K+ channels.</title>
        <authorList>
            <person name="Legros C."/>
            <person name="Ceard B."/>
            <person name="Bougis P.E."/>
            <person name="Martin-Eauclaire M.-F."/>
        </authorList>
    </citation>
    <scope>NUCLEOTIDE SEQUENCE [MRNA] OF 3-87</scope>
    <scope>MASS SPECTROMETRY</scope>
    <source>
        <tissue>Venom gland</tissue>
    </source>
</reference>
<reference key="4">
    <citation type="journal article" date="2008" name="Toxicon">
        <title>Tityus serrulatus venom peptidomics: assessing venom peptide diversity.</title>
        <authorList>
            <person name="Rates B."/>
            <person name="Ferraz K.K."/>
            <person name="Borges M.H."/>
            <person name="Richardson M."/>
            <person name="De Lima M.E."/>
            <person name="Pimenta A.M."/>
        </authorList>
    </citation>
    <scope>PARTIAL PROTEIN SEQUENCE</scope>
    <scope>SUBCELLULAR LOCATION</scope>
    <source>
        <tissue>Venom</tissue>
    </source>
</reference>
<reference key="5">
    <citation type="journal article" date="1994" name="Proc. Natl. Acad. Sci. U.S.A.">
        <title>Tityustoxin K alpha blocks voltage-gated noninactivating K+ channels and unblocks inactivating K+ channels blocked by alpha-dendrotoxin in synaptosomes.</title>
        <authorList>
            <person name="Rogowski R.S."/>
            <person name="Krueger B.K."/>
            <person name="Collins J.H."/>
            <person name="Blaustein M.P."/>
        </authorList>
    </citation>
    <scope>PROTEIN SEQUENCE OF 28-72</scope>
    <scope>FUNCTION</scope>
    <source>
        <tissue>Venom</tissue>
    </source>
</reference>
<reference key="6">
    <citation type="journal article" date="1996" name="Proc. Natl. Acad. Sci. U.S.A.">
        <authorList>
            <person name="Rogowski R.S."/>
            <person name="Krueger B.K."/>
            <person name="Collins J.H."/>
            <person name="Blaustein M.P."/>
        </authorList>
    </citation>
    <scope>ERRATUM OF PUBMED:7509073</scope>
</reference>
<reference key="7">
    <citation type="journal article" date="2016" name="Toxicon">
        <title>Ts8 scorpion toxin inhibits the Kv4.2 channel and produces nociception in vivo.</title>
        <authorList>
            <person name="Pucca M.B."/>
            <person name="Cerni F.A."/>
            <person name="Cordeiro F.A."/>
            <person name="Peigneur S."/>
            <person name="Cunha T.M."/>
            <person name="Tytgat J."/>
            <person name="Arantes E.C."/>
        </authorList>
    </citation>
    <scope>PARTIAL PROTEIN SEQUENCE</scope>
    <scope>FUNCTION</scope>
    <scope>BIOASSAY</scope>
</reference>
<reference key="8">
    <citation type="journal article" date="2024" name="J. Nat. Prod.">
        <title>Profiling the linear peptides of venom from the Brazilian scorpion Tityus serrulatus: structural and functional characterization.</title>
        <authorList>
            <person name="Dias N.B."/>
            <person name="de Souza B.M."/>
            <person name="Cid-Alda F."/>
            <person name="Dorce V.A.C."/>
            <person name="Cocchi F.K."/>
            <person name="Palma M.S."/>
        </authorList>
    </citation>
    <scope>PROTEIN SEQUENCE OF 20-27 (TYPEP-16)</scope>
    <scope>IDENTIFICATION BY MASS SPECTROMETRY</scope>
    <scope>SUBCELLULAR LOCATION</scope>
    <scope>SYNTHESIS OF 20-27</scope>
    <scope>FUNCTION</scope>
    <scope>BIOASSAY</scope>
    <source>
        <tissue>Venom</tissue>
    </source>
</reference>
<reference key="9">
    <citation type="journal article" date="2009" name="Protein Pept. Lett.">
        <title>Tityus serrulatus scorpion venom and toxins: an overview.</title>
        <authorList>
            <person name="Cologna C.T."/>
            <person name="Marcussi S."/>
            <person name="Giglio J.R."/>
            <person name="Soares A.M."/>
            <person name="Arantes E.C."/>
        </authorList>
    </citation>
    <scope>NOMENCLATURE</scope>
</reference>
<feature type="signal peptide" evidence="3">
    <location>
        <begin position="1"/>
        <end position="19"/>
    </location>
</feature>
<feature type="peptide" id="PRO_0000461721" description="Cryptide TyPep-16" evidence="7">
    <location>
        <begin position="20"/>
        <end position="27"/>
    </location>
</feature>
<feature type="chain" id="PRO_0000035343" description="Potassium channel toxin TsTXK-beta" evidence="14 16 17">
    <location>
        <begin position="28"/>
        <end position="87"/>
    </location>
</feature>
<feature type="peptide" id="PRO_0000461722" description="Cryptide Pep-3" evidence="1">
    <location>
        <begin position="32"/>
        <end position="41"/>
    </location>
</feature>
<feature type="peptide" id="PRO_0000461723" description="Cryptide Pep-26" evidence="2">
    <location>
        <begin position="40"/>
        <end position="43"/>
    </location>
</feature>
<feature type="domain" description="BetaSPN-type CS-alpha/beta" evidence="4">
    <location>
        <begin position="53"/>
        <end position="87"/>
    </location>
</feature>
<feature type="disulfide bond" evidence="4">
    <location>
        <begin position="56"/>
        <end position="77"/>
    </location>
</feature>
<feature type="disulfide bond" evidence="4">
    <location>
        <begin position="63"/>
        <end position="82"/>
    </location>
</feature>
<feature type="disulfide bond" evidence="4">
    <location>
        <begin position="67"/>
        <end position="84"/>
    </location>
</feature>
<sequence length="87" mass="9729">MERKLALLLILGMVTLASCGLREKHVQKLVALIPNDQLRSILKAVVHKVAKTQFGCPAYEGYCNDHCNDIERKDGECHGFKCKCAKD</sequence>